<proteinExistence type="evidence at protein level"/>
<evidence type="ECO:0000255" key="1"/>
<evidence type="ECO:0000256" key="2">
    <source>
        <dbReference type="SAM" id="MobiDB-lite"/>
    </source>
</evidence>
<evidence type="ECO:0000269" key="3">
    <source>
    </source>
</evidence>
<evidence type="ECO:0000269" key="4">
    <source>
    </source>
</evidence>
<evidence type="ECO:0000303" key="5">
    <source>
    </source>
</evidence>
<evidence type="ECO:0000305" key="6"/>
<evidence type="ECO:0000312" key="7">
    <source>
        <dbReference type="MGI" id="MGI:1921624"/>
    </source>
</evidence>
<reference key="1">
    <citation type="journal article" date="2003" name="DNA Res.">
        <title>Prediction of the coding sequences of mouse homologues of KIAA gene: II. The complete nucleotide sequences of 400 mouse KIAA-homologous cDNAs identified by screening of terminal sequences of cDNA clones randomly sampled from size-fractionated libraries.</title>
        <authorList>
            <person name="Okazaki N."/>
            <person name="Kikuno R."/>
            <person name="Ohara R."/>
            <person name="Inamoto S."/>
            <person name="Aizawa H."/>
            <person name="Yuasa S."/>
            <person name="Nakajima D."/>
            <person name="Nagase T."/>
            <person name="Ohara O."/>
            <person name="Koga H."/>
        </authorList>
    </citation>
    <scope>NUCLEOTIDE SEQUENCE [LARGE SCALE MRNA] (ISOFORM 1)</scope>
    <source>
        <tissue>Brain</tissue>
    </source>
</reference>
<reference key="2">
    <citation type="journal article" date="2005" name="Science">
        <title>The transcriptional landscape of the mammalian genome.</title>
        <authorList>
            <person name="Carninci P."/>
            <person name="Kasukawa T."/>
            <person name="Katayama S."/>
            <person name="Gough J."/>
            <person name="Frith M.C."/>
            <person name="Maeda N."/>
            <person name="Oyama R."/>
            <person name="Ravasi T."/>
            <person name="Lenhard B."/>
            <person name="Wells C."/>
            <person name="Kodzius R."/>
            <person name="Shimokawa K."/>
            <person name="Bajic V.B."/>
            <person name="Brenner S.E."/>
            <person name="Batalov S."/>
            <person name="Forrest A.R."/>
            <person name="Zavolan M."/>
            <person name="Davis M.J."/>
            <person name="Wilming L.G."/>
            <person name="Aidinis V."/>
            <person name="Allen J.E."/>
            <person name="Ambesi-Impiombato A."/>
            <person name="Apweiler R."/>
            <person name="Aturaliya R.N."/>
            <person name="Bailey T.L."/>
            <person name="Bansal M."/>
            <person name="Baxter L."/>
            <person name="Beisel K.W."/>
            <person name="Bersano T."/>
            <person name="Bono H."/>
            <person name="Chalk A.M."/>
            <person name="Chiu K.P."/>
            <person name="Choudhary V."/>
            <person name="Christoffels A."/>
            <person name="Clutterbuck D.R."/>
            <person name="Crowe M.L."/>
            <person name="Dalla E."/>
            <person name="Dalrymple B.P."/>
            <person name="de Bono B."/>
            <person name="Della Gatta G."/>
            <person name="di Bernardo D."/>
            <person name="Down T."/>
            <person name="Engstrom P."/>
            <person name="Fagiolini M."/>
            <person name="Faulkner G."/>
            <person name="Fletcher C.F."/>
            <person name="Fukushima T."/>
            <person name="Furuno M."/>
            <person name="Futaki S."/>
            <person name="Gariboldi M."/>
            <person name="Georgii-Hemming P."/>
            <person name="Gingeras T.R."/>
            <person name="Gojobori T."/>
            <person name="Green R.E."/>
            <person name="Gustincich S."/>
            <person name="Harbers M."/>
            <person name="Hayashi Y."/>
            <person name="Hensch T.K."/>
            <person name="Hirokawa N."/>
            <person name="Hill D."/>
            <person name="Huminiecki L."/>
            <person name="Iacono M."/>
            <person name="Ikeo K."/>
            <person name="Iwama A."/>
            <person name="Ishikawa T."/>
            <person name="Jakt M."/>
            <person name="Kanapin A."/>
            <person name="Katoh M."/>
            <person name="Kawasawa Y."/>
            <person name="Kelso J."/>
            <person name="Kitamura H."/>
            <person name="Kitano H."/>
            <person name="Kollias G."/>
            <person name="Krishnan S.P."/>
            <person name="Kruger A."/>
            <person name="Kummerfeld S.K."/>
            <person name="Kurochkin I.V."/>
            <person name="Lareau L.F."/>
            <person name="Lazarevic D."/>
            <person name="Lipovich L."/>
            <person name="Liu J."/>
            <person name="Liuni S."/>
            <person name="McWilliam S."/>
            <person name="Madan Babu M."/>
            <person name="Madera M."/>
            <person name="Marchionni L."/>
            <person name="Matsuda H."/>
            <person name="Matsuzawa S."/>
            <person name="Miki H."/>
            <person name="Mignone F."/>
            <person name="Miyake S."/>
            <person name="Morris K."/>
            <person name="Mottagui-Tabar S."/>
            <person name="Mulder N."/>
            <person name="Nakano N."/>
            <person name="Nakauchi H."/>
            <person name="Ng P."/>
            <person name="Nilsson R."/>
            <person name="Nishiguchi S."/>
            <person name="Nishikawa S."/>
            <person name="Nori F."/>
            <person name="Ohara O."/>
            <person name="Okazaki Y."/>
            <person name="Orlando V."/>
            <person name="Pang K.C."/>
            <person name="Pavan W.J."/>
            <person name="Pavesi G."/>
            <person name="Pesole G."/>
            <person name="Petrovsky N."/>
            <person name="Piazza S."/>
            <person name="Reed J."/>
            <person name="Reid J.F."/>
            <person name="Ring B.Z."/>
            <person name="Ringwald M."/>
            <person name="Rost B."/>
            <person name="Ruan Y."/>
            <person name="Salzberg S.L."/>
            <person name="Sandelin A."/>
            <person name="Schneider C."/>
            <person name="Schoenbach C."/>
            <person name="Sekiguchi K."/>
            <person name="Semple C.A."/>
            <person name="Seno S."/>
            <person name="Sessa L."/>
            <person name="Sheng Y."/>
            <person name="Shibata Y."/>
            <person name="Shimada H."/>
            <person name="Shimada K."/>
            <person name="Silva D."/>
            <person name="Sinclair B."/>
            <person name="Sperling S."/>
            <person name="Stupka E."/>
            <person name="Sugiura K."/>
            <person name="Sultana R."/>
            <person name="Takenaka Y."/>
            <person name="Taki K."/>
            <person name="Tammoja K."/>
            <person name="Tan S.L."/>
            <person name="Tang S."/>
            <person name="Taylor M.S."/>
            <person name="Tegner J."/>
            <person name="Teichmann S.A."/>
            <person name="Ueda H.R."/>
            <person name="van Nimwegen E."/>
            <person name="Verardo R."/>
            <person name="Wei C.L."/>
            <person name="Yagi K."/>
            <person name="Yamanishi H."/>
            <person name="Zabarovsky E."/>
            <person name="Zhu S."/>
            <person name="Zimmer A."/>
            <person name="Hide W."/>
            <person name="Bult C."/>
            <person name="Grimmond S.M."/>
            <person name="Teasdale R.D."/>
            <person name="Liu E.T."/>
            <person name="Brusic V."/>
            <person name="Quackenbush J."/>
            <person name="Wahlestedt C."/>
            <person name="Mattick J.S."/>
            <person name="Hume D.A."/>
            <person name="Kai C."/>
            <person name="Sasaki D."/>
            <person name="Tomaru Y."/>
            <person name="Fukuda S."/>
            <person name="Kanamori-Katayama M."/>
            <person name="Suzuki M."/>
            <person name="Aoki J."/>
            <person name="Arakawa T."/>
            <person name="Iida J."/>
            <person name="Imamura K."/>
            <person name="Itoh M."/>
            <person name="Kato T."/>
            <person name="Kawaji H."/>
            <person name="Kawagashira N."/>
            <person name="Kawashima T."/>
            <person name="Kojima M."/>
            <person name="Kondo S."/>
            <person name="Konno H."/>
            <person name="Nakano K."/>
            <person name="Ninomiya N."/>
            <person name="Nishio T."/>
            <person name="Okada M."/>
            <person name="Plessy C."/>
            <person name="Shibata K."/>
            <person name="Shiraki T."/>
            <person name="Suzuki S."/>
            <person name="Tagami M."/>
            <person name="Waki K."/>
            <person name="Watahiki A."/>
            <person name="Okamura-Oho Y."/>
            <person name="Suzuki H."/>
            <person name="Kawai J."/>
            <person name="Hayashizaki Y."/>
        </authorList>
    </citation>
    <scope>NUCLEOTIDE SEQUENCE [LARGE SCALE MRNA] (ISOFORMS 2; 3; 4 AND 5)</scope>
    <source>
        <strain>C57BL/6J</strain>
        <strain>NOD</strain>
        <tissue>Spleen</tissue>
        <tissue>Testis</tissue>
    </source>
</reference>
<reference key="3">
    <citation type="journal article" date="2009" name="PLoS Biol.">
        <title>Lineage-specific biology revealed by a finished genome assembly of the mouse.</title>
        <authorList>
            <person name="Church D.M."/>
            <person name="Goodstadt L."/>
            <person name="Hillier L.W."/>
            <person name="Zody M.C."/>
            <person name="Goldstein S."/>
            <person name="She X."/>
            <person name="Bult C.J."/>
            <person name="Agarwala R."/>
            <person name="Cherry J.L."/>
            <person name="DiCuccio M."/>
            <person name="Hlavina W."/>
            <person name="Kapustin Y."/>
            <person name="Meric P."/>
            <person name="Maglott D."/>
            <person name="Birtle Z."/>
            <person name="Marques A.C."/>
            <person name="Graves T."/>
            <person name="Zhou S."/>
            <person name="Teague B."/>
            <person name="Potamousis K."/>
            <person name="Churas C."/>
            <person name="Place M."/>
            <person name="Herschleb J."/>
            <person name="Runnheim R."/>
            <person name="Forrest D."/>
            <person name="Amos-Landgraf J."/>
            <person name="Schwartz D.C."/>
            <person name="Cheng Z."/>
            <person name="Lindblad-Toh K."/>
            <person name="Eichler E.E."/>
            <person name="Ponting C.P."/>
        </authorList>
    </citation>
    <scope>NUCLEOTIDE SEQUENCE [LARGE SCALE GENOMIC DNA]</scope>
    <source>
        <strain>C57BL/6J</strain>
    </source>
</reference>
<reference key="4">
    <citation type="journal article" date="2004" name="Genome Res.">
        <title>The status, quality, and expansion of the NIH full-length cDNA project: the Mammalian Gene Collection (MGC).</title>
        <authorList>
            <consortium name="The MGC Project Team"/>
        </authorList>
    </citation>
    <scope>NUCLEOTIDE SEQUENCE [LARGE SCALE MRNA] (ISOFORM 1)</scope>
    <source>
        <tissue>Brain</tissue>
    </source>
</reference>
<reference key="5">
    <citation type="journal article" date="2009" name="Proc. Natl. Acad. Sci. U.S.A.">
        <title>Pdx1 (MODY4) regulates pancreatic beta cell susceptibility to ER stress.</title>
        <authorList>
            <person name="Sachdeva M.M."/>
            <person name="Claiborn K.C."/>
            <person name="Khoo C."/>
            <person name="Yang J."/>
            <person name="Groff D.N."/>
            <person name="Mirmira R.G."/>
            <person name="Stoffers D.A."/>
        </authorList>
    </citation>
    <scope>TISSUE SPECIFICITY</scope>
</reference>
<reference key="6">
    <citation type="journal article" date="2010" name="Cell">
        <title>A tissue-specific atlas of mouse protein phosphorylation and expression.</title>
        <authorList>
            <person name="Huttlin E.L."/>
            <person name="Jedrychowski M.P."/>
            <person name="Elias J.E."/>
            <person name="Goswami T."/>
            <person name="Rad R."/>
            <person name="Beausoleil S.A."/>
            <person name="Villen J."/>
            <person name="Haas W."/>
            <person name="Sowa M.E."/>
            <person name="Gygi S.P."/>
        </authorList>
    </citation>
    <scope>IDENTIFICATION BY MASS SPECTROMETRY [LARGE SCALE ANALYSIS]</scope>
    <source>
        <tissue>Brain</tissue>
        <tissue>Heart</tissue>
        <tissue>Liver</tissue>
        <tissue>Lung</tissue>
        <tissue>Pancreas</tissue>
    </source>
</reference>
<reference key="7">
    <citation type="journal article" date="2014" name="Cell">
        <title>The diabetes susceptibility gene Clec16a regulates mitophagy.</title>
        <authorList>
            <person name="Soleimanpour S.A."/>
            <person name="Gupta A."/>
            <person name="Bakay M."/>
            <person name="Ferrari A.M."/>
            <person name="Groff D.N."/>
            <person name="Fadista J."/>
            <person name="Spruce L.A."/>
            <person name="Kushner J.A."/>
            <person name="Groop L."/>
            <person name="Seeholzer S.H."/>
            <person name="Kaufman B.A."/>
            <person name="Hakonarson H."/>
            <person name="Stoffers D.A."/>
        </authorList>
    </citation>
    <scope>FUNCTION</scope>
    <scope>SUBCELLULAR LOCATION</scope>
    <scope>INTERACTION WITH RNF41</scope>
    <scope>DISRUPTION PHENOTYPE</scope>
    <scope>TISSUE SPECIFICITY</scope>
</reference>
<comment type="function">
    <text evidence="4">Regulator of mitophagy through the upstream regulation of the RNF41/NRDP1-PRKN pathway. Mitophagy is a selective form of autophagy necessary for mitochondrial quality control. The RNF41/NRDP1-PRKN pathway regulates autophagosome-lysosome fusion during late mitophagy. May protect RNF41/NRDP1 from proteasomal degradation, RNF41/NRDP1 which regulates proteasomal degradation of PRKN. Plays a key role in beta cells functions by regulating mitophagy/autophagy and mitochondrial health.</text>
</comment>
<comment type="subunit">
    <text evidence="4">Interacts with RNF41/NRDP1.</text>
</comment>
<comment type="interaction">
    <interactant intactId="EBI-9696757">
        <id>Q80U30-2</id>
    </interactant>
    <interactant intactId="EBI-7059583">
        <id>Q8BH75</id>
        <label>Rnf41</label>
    </interactant>
    <organismsDiffer>false</organismsDiffer>
    <experiments>3</experiments>
</comment>
<comment type="subcellular location">
    <subcellularLocation>
        <location evidence="4">Endosome membrane</location>
        <topology evidence="4">Peripheral membrane protein</topology>
    </subcellularLocation>
    <subcellularLocation>
        <location evidence="4">Lysosome membrane</location>
        <topology evidence="4">Peripheral membrane protein</topology>
    </subcellularLocation>
    <text evidence="4">Associates with the endolysosome membrane.</text>
</comment>
<comment type="alternative products">
    <event type="alternative splicing"/>
    <isoform>
        <id>Q80U30-1</id>
        <name>1</name>
        <sequence type="displayed"/>
    </isoform>
    <isoform>
        <id>Q80U30-2</id>
        <name>2</name>
        <sequence type="described" ref="VSP_022752"/>
    </isoform>
    <isoform>
        <id>Q80U30-3</id>
        <name>3</name>
        <sequence type="described" ref="VSP_022752 VSP_022753 VSP_022754 VSP_022757"/>
    </isoform>
    <isoform>
        <id>Q80U30-4</id>
        <name>4</name>
        <sequence type="described" ref="VSP_022752 VSP_022753 VSP_022755 VSP_022756"/>
    </isoform>
    <isoform>
        <id>Q80U30-5</id>
        <name>5</name>
        <sequence type="described" ref="VSP_022751 VSP_022758 VSP_022759"/>
    </isoform>
</comment>
<comment type="tissue specificity">
    <text evidence="3 4">Ubiquitously expressed. Expressed in pancreatic islets.</text>
</comment>
<comment type="disruption phenotype">
    <text evidence="4">Mice with pancreatic specific deletion of Clec16a are significantly hyperglycemic and have reduced basal and blunted insulin release after glucose administration. Mutant mice have normal islet architecture and beta cell mass, but beta cells show accumulation of vacuolated structures and unhealthy mitochondria (rounded mitochondria with disordered and amorphous structure). Not associated with immune infiltration and insulitis.</text>
</comment>
<comment type="similarity">
    <text evidence="6">Belongs to the CLEC16A/gop-1 family.</text>
</comment>
<comment type="sequence caution" evidence="6">
    <conflict type="erroneous initiation">
        <sequence resource="EMBL-CDS" id="BAC65537"/>
    </conflict>
    <text>Extended N-terminus.</text>
</comment>
<protein>
    <recommendedName>
        <fullName evidence="6">Protein CLEC16A</fullName>
    </recommendedName>
</protein>
<name>CL16A_MOUSE</name>
<feature type="chain" id="PRO_0000274477" description="Protein CLEC16A">
    <location>
        <begin position="1"/>
        <end position="1036"/>
    </location>
</feature>
<feature type="domain" description="FPL" evidence="1">
    <location>
        <begin position="51"/>
        <end position="198"/>
    </location>
</feature>
<feature type="region of interest" description="Disordered" evidence="2">
    <location>
        <begin position="375"/>
        <end position="416"/>
    </location>
</feature>
<feature type="region of interest" description="Disordered" evidence="2">
    <location>
        <begin position="437"/>
        <end position="458"/>
    </location>
</feature>
<feature type="region of interest" description="Disordered" evidence="2">
    <location>
        <begin position="876"/>
        <end position="967"/>
    </location>
</feature>
<feature type="region of interest" description="Disordered" evidence="2">
    <location>
        <begin position="1008"/>
        <end position="1036"/>
    </location>
</feature>
<feature type="compositionally biased region" description="Basic residues" evidence="2">
    <location>
        <begin position="381"/>
        <end position="392"/>
    </location>
</feature>
<feature type="compositionally biased region" description="Low complexity" evidence="2">
    <location>
        <begin position="877"/>
        <end position="891"/>
    </location>
</feature>
<feature type="compositionally biased region" description="Low complexity" evidence="2">
    <location>
        <begin position="898"/>
        <end position="923"/>
    </location>
</feature>
<feature type="compositionally biased region" description="Low complexity" evidence="2">
    <location>
        <begin position="943"/>
        <end position="954"/>
    </location>
</feature>
<feature type="splice variant" id="VSP_022751" description="In isoform 5." evidence="5">
    <location>
        <begin position="1"/>
        <end position="421"/>
    </location>
</feature>
<feature type="splice variant" id="VSP_022752" description="In isoform 2, isoform 3 and isoform 4." evidence="5">
    <location>
        <begin position="201"/>
        <end position="202"/>
    </location>
</feature>
<feature type="splice variant" id="VSP_022753" description="In isoform 3 and isoform 4." evidence="5">
    <original>K</original>
    <variation>KGTEGGSKSMKTSGERE</variation>
    <location>
        <position position="418"/>
    </location>
</feature>
<feature type="splice variant" id="VSP_022754" description="In isoform 3." evidence="5">
    <original>FAVAQCINQHSSPSLSSPSPPFASGSPGGSGS</original>
    <variation>KPHLLLGTQAAFLLSPLEAFLSESRLLAALAS</variation>
    <location>
        <begin position="867"/>
        <end position="898"/>
    </location>
</feature>
<feature type="splice variant" id="VSP_022755" description="In isoform 4." evidence="5">
    <original>AV</original>
    <variation>HV</variation>
    <location>
        <begin position="868"/>
        <end position="869"/>
    </location>
</feature>
<feature type="splice variant" id="VSP_022756" description="In isoform 4." evidence="5">
    <location>
        <begin position="870"/>
        <end position="1036"/>
    </location>
</feature>
<feature type="splice variant" id="VSP_022757" description="In isoform 3." evidence="5">
    <location>
        <begin position="899"/>
        <end position="1036"/>
    </location>
</feature>
<feature type="splice variant" id="VSP_022758" description="In isoform 5." evidence="5">
    <original>DAPTTPEQPQPHLDQSVIGNEMDVN</original>
    <variation>VRSGRKGRRRVFSLSEADSHGGHWV</variation>
    <location>
        <begin position="919"/>
        <end position="943"/>
    </location>
</feature>
<feature type="splice variant" id="VSP_022759" description="In isoform 5." evidence="5">
    <location>
        <begin position="944"/>
        <end position="1036"/>
    </location>
</feature>
<feature type="sequence conflict" description="In Ref. 2; BAE33184." evidence="6" ref="2">
    <original>E</original>
    <variation>G</variation>
    <location>
        <position position="56"/>
    </location>
</feature>
<gene>
    <name evidence="7" type="primary">Clec16a</name>
    <name type="synonym">Kiaa0350</name>
</gene>
<sequence>MFGRSRSWVGGGHSKSSRNIHSLDHLKYLYHVLTKNTTVTEQNRNLLVETIRSITEILIWGDQNDSSVFDFFLEKNMFVFFLNILRQKSGRYVCVQLLQTLNILFENISHETSLYYLLSNNYVNSIIVHKFDFSDEEIMAYYISFLKTLSLKLNNHTVHFFYNEHTNDFALYTEAIKFFNHPESMVRIAVRTITLNVYKVSLDNQAMLHYIRDKTAVPYFSNLVWFIGSHVIELDNCVQTDEEHRNRGKLSDLVAEHLDHLHYLNDILIINCEFLNDVLTDHLLNRLFLPLYVYSLENPDKGGERPKISLPVSLYLLSQVFLIIHHAPLVNSLAEVILNGDLSETYTKPAQDVPRSSAKPSIRCFIKPTETLERSLEMNKHKGKKRMQKRPNYKNVGEEEDEERGSAEDAQEDAEKTKEIEMVIMKLGKLSEVAAAGTSVQEQNTTDEEKSAATNSENAQWSRPFLDMVYHALDSPDDDYHALFVLCLLYAMSHNKGMDPEKLKRIQLPVPSEAEKTTYNHLLAERLIRIMNNAAQPDGRIRLATLELSCLLLKQQVLTSSGCVIKDVHLACLEGAREESVHLVRHFYKGEEIFLDMFEDEYRSMTIKPMNVEYLMMDASILLPPTGTPLTGIDFVKRLPCGDVEKTRRAIRVFFMLRSLSLQLRGEPETQLPLTREEDLIKTDDVLDLNNSDLIACTVITKDGGMVQRFLAVDIYQMSLVEPDVSRLGWGVVKFAGLLQDMQVTGVEDDSRALNITIHKPASSPHSKPFPILQATFVFSDHIRCIIAKQRLAKGRIQARRMKMQRIAALLDLPIQPTTEVLGFGLCSSSSSSQHLPFRFYEQCRRGSSDPTVQRSVFASVDKVPGFAVAQCINQHSSPSLSSPSPPFASGSPGGSGSTSHCDSGGSSSAPSATQSPADAPTTPEQPQPHLDQSVIGNEMDVNSKPSKNSSARSSEGETMHLSPSLLPAQQPTISLLYEDTADTLSVESLTIVPPVDPHSLRALSGISQLPTLPAADTETPAEGAVNPEPAEPTEH</sequence>
<accession>Q80U30</accession>
<accession>A6X932</accession>
<accession>B2RSL3</accession>
<accession>Q3TCF2</accession>
<accession>Q3U0F5</accession>
<accession>Q3U2F6</accession>
<accession>Q8CEQ8</accession>
<keyword id="KW-0025">Alternative splicing</keyword>
<keyword id="KW-0072">Autophagy</keyword>
<keyword id="KW-0967">Endosome</keyword>
<keyword id="KW-0458">Lysosome</keyword>
<keyword id="KW-0472">Membrane</keyword>
<keyword id="KW-1185">Reference proteome</keyword>
<organism>
    <name type="scientific">Mus musculus</name>
    <name type="common">Mouse</name>
    <dbReference type="NCBI Taxonomy" id="10090"/>
    <lineage>
        <taxon>Eukaryota</taxon>
        <taxon>Metazoa</taxon>
        <taxon>Chordata</taxon>
        <taxon>Craniata</taxon>
        <taxon>Vertebrata</taxon>
        <taxon>Euteleostomi</taxon>
        <taxon>Mammalia</taxon>
        <taxon>Eutheria</taxon>
        <taxon>Euarchontoglires</taxon>
        <taxon>Glires</taxon>
        <taxon>Rodentia</taxon>
        <taxon>Myomorpha</taxon>
        <taxon>Muroidea</taxon>
        <taxon>Muridae</taxon>
        <taxon>Murinae</taxon>
        <taxon>Mus</taxon>
        <taxon>Mus</taxon>
    </lineage>
</organism>
<dbReference type="EMBL" id="AK122255">
    <property type="protein sequence ID" value="BAC65537.1"/>
    <property type="status" value="ALT_INIT"/>
    <property type="molecule type" value="mRNA"/>
</dbReference>
<dbReference type="EMBL" id="AK016529">
    <property type="protein sequence ID" value="BAC25487.1"/>
    <property type="molecule type" value="mRNA"/>
</dbReference>
<dbReference type="EMBL" id="AK155314">
    <property type="protein sequence ID" value="BAE33184.1"/>
    <property type="molecule type" value="mRNA"/>
</dbReference>
<dbReference type="EMBL" id="AK156927">
    <property type="protein sequence ID" value="BAE33899.1"/>
    <property type="molecule type" value="mRNA"/>
</dbReference>
<dbReference type="EMBL" id="AK170754">
    <property type="protein sequence ID" value="BAE42005.1"/>
    <property type="molecule type" value="mRNA"/>
</dbReference>
<dbReference type="EMBL" id="AC122352">
    <property type="status" value="NOT_ANNOTATED_CDS"/>
    <property type="molecule type" value="Genomic_DNA"/>
</dbReference>
<dbReference type="EMBL" id="AC154430">
    <property type="status" value="NOT_ANNOTATED_CDS"/>
    <property type="molecule type" value="Genomic_DNA"/>
</dbReference>
<dbReference type="EMBL" id="CT010583">
    <property type="status" value="NOT_ANNOTATED_CDS"/>
    <property type="molecule type" value="Genomic_DNA"/>
</dbReference>
<dbReference type="EMBL" id="BC138907">
    <property type="protein sequence ID" value="AAI38908.1"/>
    <property type="molecule type" value="mRNA"/>
</dbReference>
<dbReference type="EMBL" id="BC138909">
    <property type="protein sequence ID" value="AAI38910.1"/>
    <property type="molecule type" value="mRNA"/>
</dbReference>
<dbReference type="CCDS" id="CCDS37253.1">
    <molecule id="Q80U30-1"/>
</dbReference>
<dbReference type="CCDS" id="CCDS57018.1">
    <molecule id="Q80U30-2"/>
</dbReference>
<dbReference type="RefSeq" id="NP_001191158.1">
    <molecule id="Q80U30-2"/>
    <property type="nucleotide sequence ID" value="NM_001204229.1"/>
</dbReference>
<dbReference type="RefSeq" id="NP_808230.2">
    <molecule id="Q80U30-1"/>
    <property type="nucleotide sequence ID" value="NM_177562.5"/>
</dbReference>
<dbReference type="BioGRID" id="216700">
    <property type="interactions" value="6"/>
</dbReference>
<dbReference type="FunCoup" id="Q80U30">
    <property type="interactions" value="3544"/>
</dbReference>
<dbReference type="IntAct" id="Q80U30">
    <property type="interactions" value="1"/>
</dbReference>
<dbReference type="STRING" id="10090.ENSMUSP00000065423"/>
<dbReference type="iPTMnet" id="Q80U30"/>
<dbReference type="PhosphoSitePlus" id="Q80U30"/>
<dbReference type="PaxDb" id="10090-ENSMUSP00000065423"/>
<dbReference type="PeptideAtlas" id="Q80U30"/>
<dbReference type="ProteomicsDB" id="281637">
    <molecule id="Q80U30-1"/>
</dbReference>
<dbReference type="ProteomicsDB" id="281638">
    <molecule id="Q80U30-2"/>
</dbReference>
<dbReference type="ProteomicsDB" id="281639">
    <molecule id="Q80U30-3"/>
</dbReference>
<dbReference type="ProteomicsDB" id="281640">
    <molecule id="Q80U30-4"/>
</dbReference>
<dbReference type="ProteomicsDB" id="281641">
    <molecule id="Q80U30-5"/>
</dbReference>
<dbReference type="Pumba" id="Q80U30"/>
<dbReference type="Antibodypedia" id="24665">
    <property type="antibodies" value="211 antibodies from 29 providers"/>
</dbReference>
<dbReference type="DNASU" id="74374"/>
<dbReference type="Ensembl" id="ENSMUST00000038145.13">
    <molecule id="Q80U30-3"/>
    <property type="protein sequence ID" value="ENSMUSP00000040267.7"/>
    <property type="gene ID" value="ENSMUSG00000068663.15"/>
</dbReference>
<dbReference type="Ensembl" id="ENSMUST00000066345.15">
    <molecule id="Q80U30-1"/>
    <property type="protein sequence ID" value="ENSMUSP00000065423.8"/>
    <property type="gene ID" value="ENSMUSG00000068663.15"/>
</dbReference>
<dbReference type="Ensembl" id="ENSMUST00000115823.2">
    <molecule id="Q80U30-5"/>
    <property type="protein sequence ID" value="ENSMUSP00000111489.2"/>
    <property type="gene ID" value="ENSMUSG00000068663.15"/>
</dbReference>
<dbReference type="Ensembl" id="ENSMUST00000115827.8">
    <molecule id="Q80U30-4"/>
    <property type="protein sequence ID" value="ENSMUSP00000111493.2"/>
    <property type="gene ID" value="ENSMUSG00000068663.15"/>
</dbReference>
<dbReference type="Ensembl" id="ENSMUST00000155633.8">
    <molecule id="Q80U30-2"/>
    <property type="protein sequence ID" value="ENSMUSP00000123189.2"/>
    <property type="gene ID" value="ENSMUSG00000068663.15"/>
</dbReference>
<dbReference type="GeneID" id="74374"/>
<dbReference type="KEGG" id="mmu:74374"/>
<dbReference type="UCSC" id="uc007ydy.2">
    <molecule id="Q80U30-3"/>
    <property type="organism name" value="mouse"/>
</dbReference>
<dbReference type="UCSC" id="uc007ydz.2">
    <molecule id="Q80U30-4"/>
    <property type="organism name" value="mouse"/>
</dbReference>
<dbReference type="UCSC" id="uc007yea.2">
    <molecule id="Q80U30-1"/>
    <property type="organism name" value="mouse"/>
</dbReference>
<dbReference type="UCSC" id="uc007yec.2">
    <molecule id="Q80U30-5"/>
    <property type="organism name" value="mouse"/>
</dbReference>
<dbReference type="AGR" id="MGI:1921624"/>
<dbReference type="CTD" id="23274"/>
<dbReference type="MGI" id="MGI:1921624">
    <property type="gene designation" value="Clec16a"/>
</dbReference>
<dbReference type="VEuPathDB" id="HostDB:ENSMUSG00000068663"/>
<dbReference type="eggNOG" id="KOG2219">
    <property type="taxonomic scope" value="Eukaryota"/>
</dbReference>
<dbReference type="GeneTree" id="ENSGT00390000013826"/>
<dbReference type="HOGENOM" id="CLU_007413_1_0_1"/>
<dbReference type="InParanoid" id="Q80U30"/>
<dbReference type="OMA" id="SMQEQNT"/>
<dbReference type="PhylomeDB" id="Q80U30"/>
<dbReference type="TreeFam" id="TF314293"/>
<dbReference type="BioGRID-ORCS" id="74374">
    <property type="hits" value="9 hits in 76 CRISPR screens"/>
</dbReference>
<dbReference type="ChiTaRS" id="Clec16a">
    <property type="organism name" value="mouse"/>
</dbReference>
<dbReference type="PRO" id="PR:Q80U30"/>
<dbReference type="Proteomes" id="UP000000589">
    <property type="component" value="Chromosome 16"/>
</dbReference>
<dbReference type="RNAct" id="Q80U30">
    <property type="molecule type" value="protein"/>
</dbReference>
<dbReference type="Bgee" id="ENSMUSG00000068663">
    <property type="expression patterns" value="Expressed in dentate gyrus of hippocampal formation granule cell and 207 other cell types or tissues"/>
</dbReference>
<dbReference type="ExpressionAtlas" id="Q80U30">
    <property type="expression patterns" value="baseline and differential"/>
</dbReference>
<dbReference type="GO" id="GO:0036020">
    <property type="term" value="C:endolysosome membrane"/>
    <property type="evidence" value="ECO:0000314"/>
    <property type="project" value="MGI"/>
</dbReference>
<dbReference type="GO" id="GO:0006914">
    <property type="term" value="P:autophagy"/>
    <property type="evidence" value="ECO:0007669"/>
    <property type="project" value="UniProtKB-KW"/>
</dbReference>
<dbReference type="GO" id="GO:1901525">
    <property type="term" value="P:negative regulation of mitophagy"/>
    <property type="evidence" value="ECO:0000315"/>
    <property type="project" value="MGI"/>
</dbReference>
<dbReference type="GO" id="GO:0032435">
    <property type="term" value="P:negative regulation of proteasomal ubiquitin-dependent protein catabolic process"/>
    <property type="evidence" value="ECO:0000315"/>
    <property type="project" value="MGI"/>
</dbReference>
<dbReference type="GO" id="GO:1901098">
    <property type="term" value="P:positive regulation of autophagosome maturation"/>
    <property type="evidence" value="ECO:0000315"/>
    <property type="project" value="MGI"/>
</dbReference>
<dbReference type="GO" id="GO:0043161">
    <property type="term" value="P:proteasome-mediated ubiquitin-dependent protein catabolic process"/>
    <property type="evidence" value="ECO:0000315"/>
    <property type="project" value="MGI"/>
</dbReference>
<dbReference type="GO" id="GO:0031648">
    <property type="term" value="P:protein destabilization"/>
    <property type="evidence" value="ECO:0000315"/>
    <property type="project" value="DisProt"/>
</dbReference>
<dbReference type="GO" id="GO:0032434">
    <property type="term" value="P:regulation of proteasomal ubiquitin-dependent protein catabolic process"/>
    <property type="evidence" value="ECO:0000353"/>
    <property type="project" value="DisProt"/>
</dbReference>
<dbReference type="InterPro" id="IPR039272">
    <property type="entry name" value="CLEC16A/TT9"/>
</dbReference>
<dbReference type="InterPro" id="IPR045820">
    <property type="entry name" value="CLEC16A/TT9_C"/>
</dbReference>
<dbReference type="InterPro" id="IPR019155">
    <property type="entry name" value="CLEC16A/TT9_N"/>
</dbReference>
<dbReference type="PANTHER" id="PTHR21481">
    <property type="entry name" value="PROTEIN CLEC16A"/>
    <property type="match status" value="1"/>
</dbReference>
<dbReference type="PANTHER" id="PTHR21481:SF0">
    <property type="entry name" value="PROTEIN CLEC16A"/>
    <property type="match status" value="1"/>
</dbReference>
<dbReference type="Pfam" id="PF19439">
    <property type="entry name" value="CLEC16A_C"/>
    <property type="match status" value="1"/>
</dbReference>
<dbReference type="Pfam" id="PF09758">
    <property type="entry name" value="FPL"/>
    <property type="match status" value="1"/>
</dbReference>